<sequence>MQTLHVELGERRYPIFIGSQLDPKQLLEPYIHGQQVMIVSNVTVAPLYLSHYQEALESLGKTVATCILPDGEKYKDIQHLNLIFDALLEAGFNRDCTVLALGGGVIGDMAGFASACFQRGVYFVQVPTTLLSQVDSSVGGKTGINHPLGKNMLGAFQQPQVVLADMAQLNTLPERELSAGLAEVIKYALLGDEDFLVWLEENMDGLVARDADLLAEAVYRSCAHKARIVANDEKEQGERALLNLGHTFGHAIESYLGYGTWLHGEAVATGMVMAADLSQRLGWISNEDVARTKKIIQRANLPISCPQIPLDDFLGYMAHDKKVLNGQLRLVLLKQLGQAVITKDFDVELMKQAILANQHG</sequence>
<gene>
    <name evidence="1" type="primary">aroB</name>
    <name type="ordered locus">ABAYE0296</name>
</gene>
<protein>
    <recommendedName>
        <fullName evidence="1">3-dehydroquinate synthase</fullName>
        <shortName evidence="1">DHQS</shortName>
        <ecNumber evidence="1">4.2.3.4</ecNumber>
    </recommendedName>
</protein>
<evidence type="ECO:0000255" key="1">
    <source>
        <dbReference type="HAMAP-Rule" id="MF_00110"/>
    </source>
</evidence>
<keyword id="KW-0028">Amino-acid biosynthesis</keyword>
<keyword id="KW-0057">Aromatic amino acid biosynthesis</keyword>
<keyword id="KW-0170">Cobalt</keyword>
<keyword id="KW-0963">Cytoplasm</keyword>
<keyword id="KW-0456">Lyase</keyword>
<keyword id="KW-0479">Metal-binding</keyword>
<keyword id="KW-0520">NAD</keyword>
<keyword id="KW-0547">Nucleotide-binding</keyword>
<keyword id="KW-0862">Zinc</keyword>
<accession>B0V8M9</accession>
<proteinExistence type="inferred from homology"/>
<feature type="chain" id="PRO_1000094442" description="3-dehydroquinate synthase">
    <location>
        <begin position="1"/>
        <end position="360"/>
    </location>
</feature>
<feature type="binding site" evidence="1">
    <location>
        <begin position="70"/>
        <end position="75"/>
    </location>
    <ligand>
        <name>NAD(+)</name>
        <dbReference type="ChEBI" id="CHEBI:57540"/>
    </ligand>
</feature>
<feature type="binding site" evidence="1">
    <location>
        <begin position="104"/>
        <end position="108"/>
    </location>
    <ligand>
        <name>NAD(+)</name>
        <dbReference type="ChEBI" id="CHEBI:57540"/>
    </ligand>
</feature>
<feature type="binding site" evidence="1">
    <location>
        <begin position="128"/>
        <end position="129"/>
    </location>
    <ligand>
        <name>NAD(+)</name>
        <dbReference type="ChEBI" id="CHEBI:57540"/>
    </ligand>
</feature>
<feature type="binding site" evidence="1">
    <location>
        <position position="141"/>
    </location>
    <ligand>
        <name>NAD(+)</name>
        <dbReference type="ChEBI" id="CHEBI:57540"/>
    </ligand>
</feature>
<feature type="binding site" evidence="1">
    <location>
        <position position="150"/>
    </location>
    <ligand>
        <name>NAD(+)</name>
        <dbReference type="ChEBI" id="CHEBI:57540"/>
    </ligand>
</feature>
<feature type="binding site" evidence="1">
    <location>
        <position position="183"/>
    </location>
    <ligand>
        <name>Zn(2+)</name>
        <dbReference type="ChEBI" id="CHEBI:29105"/>
    </ligand>
</feature>
<feature type="binding site" evidence="1">
    <location>
        <position position="246"/>
    </location>
    <ligand>
        <name>Zn(2+)</name>
        <dbReference type="ChEBI" id="CHEBI:29105"/>
    </ligand>
</feature>
<feature type="binding site" evidence="1">
    <location>
        <position position="263"/>
    </location>
    <ligand>
        <name>Zn(2+)</name>
        <dbReference type="ChEBI" id="CHEBI:29105"/>
    </ligand>
</feature>
<comment type="function">
    <text evidence="1">Catalyzes the conversion of 3-deoxy-D-arabino-heptulosonate 7-phosphate (DAHP) to dehydroquinate (DHQ).</text>
</comment>
<comment type="catalytic activity">
    <reaction evidence="1">
        <text>7-phospho-2-dehydro-3-deoxy-D-arabino-heptonate = 3-dehydroquinate + phosphate</text>
        <dbReference type="Rhea" id="RHEA:21968"/>
        <dbReference type="ChEBI" id="CHEBI:32364"/>
        <dbReference type="ChEBI" id="CHEBI:43474"/>
        <dbReference type="ChEBI" id="CHEBI:58394"/>
        <dbReference type="EC" id="4.2.3.4"/>
    </reaction>
</comment>
<comment type="cofactor">
    <cofactor evidence="1">
        <name>Co(2+)</name>
        <dbReference type="ChEBI" id="CHEBI:48828"/>
    </cofactor>
    <cofactor evidence="1">
        <name>Zn(2+)</name>
        <dbReference type="ChEBI" id="CHEBI:29105"/>
    </cofactor>
    <text evidence="1">Binds 1 divalent metal cation per subunit. Can use either Co(2+) or Zn(2+).</text>
</comment>
<comment type="cofactor">
    <cofactor evidence="1">
        <name>NAD(+)</name>
        <dbReference type="ChEBI" id="CHEBI:57540"/>
    </cofactor>
</comment>
<comment type="pathway">
    <text evidence="1">Metabolic intermediate biosynthesis; chorismate biosynthesis; chorismate from D-erythrose 4-phosphate and phosphoenolpyruvate: step 2/7.</text>
</comment>
<comment type="subcellular location">
    <subcellularLocation>
        <location evidence="1">Cytoplasm</location>
    </subcellularLocation>
</comment>
<comment type="similarity">
    <text evidence="1">Belongs to the sugar phosphate cyclases superfamily. Dehydroquinate synthase family.</text>
</comment>
<reference key="1">
    <citation type="journal article" date="2008" name="PLoS ONE">
        <title>Comparative analysis of Acinetobacters: three genomes for three lifestyles.</title>
        <authorList>
            <person name="Vallenet D."/>
            <person name="Nordmann P."/>
            <person name="Barbe V."/>
            <person name="Poirel L."/>
            <person name="Mangenot S."/>
            <person name="Bataille E."/>
            <person name="Dossat C."/>
            <person name="Gas S."/>
            <person name="Kreimeyer A."/>
            <person name="Lenoble P."/>
            <person name="Oztas S."/>
            <person name="Poulain J."/>
            <person name="Segurens B."/>
            <person name="Robert C."/>
            <person name="Abergel C."/>
            <person name="Claverie J.-M."/>
            <person name="Raoult D."/>
            <person name="Medigue C."/>
            <person name="Weissenbach J."/>
            <person name="Cruveiller S."/>
        </authorList>
    </citation>
    <scope>NUCLEOTIDE SEQUENCE [LARGE SCALE GENOMIC DNA]</scope>
    <source>
        <strain>AYE</strain>
    </source>
</reference>
<organism>
    <name type="scientific">Acinetobacter baumannii (strain AYE)</name>
    <dbReference type="NCBI Taxonomy" id="509173"/>
    <lineage>
        <taxon>Bacteria</taxon>
        <taxon>Pseudomonadati</taxon>
        <taxon>Pseudomonadota</taxon>
        <taxon>Gammaproteobacteria</taxon>
        <taxon>Moraxellales</taxon>
        <taxon>Moraxellaceae</taxon>
        <taxon>Acinetobacter</taxon>
        <taxon>Acinetobacter calcoaceticus/baumannii complex</taxon>
    </lineage>
</organism>
<dbReference type="EC" id="4.2.3.4" evidence="1"/>
<dbReference type="EMBL" id="CU459141">
    <property type="protein sequence ID" value="CAM85275.1"/>
    <property type="molecule type" value="Genomic_DNA"/>
</dbReference>
<dbReference type="RefSeq" id="WP_001193997.1">
    <property type="nucleotide sequence ID" value="NZ_JBDGFB010000011.1"/>
</dbReference>
<dbReference type="SMR" id="B0V8M9"/>
<dbReference type="EnsemblBacteria" id="CAM85275">
    <property type="protein sequence ID" value="CAM85275"/>
    <property type="gene ID" value="ABAYE0296"/>
</dbReference>
<dbReference type="KEGG" id="aby:ABAYE0296"/>
<dbReference type="HOGENOM" id="CLU_001201_0_2_6"/>
<dbReference type="UniPathway" id="UPA00053">
    <property type="reaction ID" value="UER00085"/>
</dbReference>
<dbReference type="GO" id="GO:0005737">
    <property type="term" value="C:cytoplasm"/>
    <property type="evidence" value="ECO:0007669"/>
    <property type="project" value="UniProtKB-SubCell"/>
</dbReference>
<dbReference type="GO" id="GO:0003856">
    <property type="term" value="F:3-dehydroquinate synthase activity"/>
    <property type="evidence" value="ECO:0007669"/>
    <property type="project" value="UniProtKB-UniRule"/>
</dbReference>
<dbReference type="GO" id="GO:0046872">
    <property type="term" value="F:metal ion binding"/>
    <property type="evidence" value="ECO:0007669"/>
    <property type="project" value="UniProtKB-KW"/>
</dbReference>
<dbReference type="GO" id="GO:0000166">
    <property type="term" value="F:nucleotide binding"/>
    <property type="evidence" value="ECO:0007669"/>
    <property type="project" value="UniProtKB-KW"/>
</dbReference>
<dbReference type="GO" id="GO:0008652">
    <property type="term" value="P:amino acid biosynthetic process"/>
    <property type="evidence" value="ECO:0007669"/>
    <property type="project" value="UniProtKB-KW"/>
</dbReference>
<dbReference type="GO" id="GO:0009073">
    <property type="term" value="P:aromatic amino acid family biosynthetic process"/>
    <property type="evidence" value="ECO:0007669"/>
    <property type="project" value="UniProtKB-KW"/>
</dbReference>
<dbReference type="GO" id="GO:0009423">
    <property type="term" value="P:chorismate biosynthetic process"/>
    <property type="evidence" value="ECO:0007669"/>
    <property type="project" value="UniProtKB-UniRule"/>
</dbReference>
<dbReference type="CDD" id="cd08195">
    <property type="entry name" value="DHQS"/>
    <property type="match status" value="1"/>
</dbReference>
<dbReference type="FunFam" id="1.20.1090.10:FF:000002">
    <property type="entry name" value="3-dehydroquinate synthase"/>
    <property type="match status" value="1"/>
</dbReference>
<dbReference type="FunFam" id="3.40.50.1970:FF:000001">
    <property type="entry name" value="3-dehydroquinate synthase"/>
    <property type="match status" value="1"/>
</dbReference>
<dbReference type="Gene3D" id="3.40.50.1970">
    <property type="match status" value="1"/>
</dbReference>
<dbReference type="Gene3D" id="1.20.1090.10">
    <property type="entry name" value="Dehydroquinate synthase-like - alpha domain"/>
    <property type="match status" value="1"/>
</dbReference>
<dbReference type="HAMAP" id="MF_00110">
    <property type="entry name" value="DHQ_synthase"/>
    <property type="match status" value="1"/>
</dbReference>
<dbReference type="InterPro" id="IPR050071">
    <property type="entry name" value="Dehydroquinate_synthase"/>
</dbReference>
<dbReference type="InterPro" id="IPR016037">
    <property type="entry name" value="DHQ_synth_AroB"/>
</dbReference>
<dbReference type="InterPro" id="IPR030963">
    <property type="entry name" value="DHQ_synth_fam"/>
</dbReference>
<dbReference type="InterPro" id="IPR030960">
    <property type="entry name" value="DHQS/DOIS_N"/>
</dbReference>
<dbReference type="InterPro" id="IPR056179">
    <property type="entry name" value="DHQS_C"/>
</dbReference>
<dbReference type="NCBIfam" id="TIGR01357">
    <property type="entry name" value="aroB"/>
    <property type="match status" value="1"/>
</dbReference>
<dbReference type="PANTHER" id="PTHR43622">
    <property type="entry name" value="3-DEHYDROQUINATE SYNTHASE"/>
    <property type="match status" value="1"/>
</dbReference>
<dbReference type="PANTHER" id="PTHR43622:SF7">
    <property type="entry name" value="3-DEHYDROQUINATE SYNTHASE, CHLOROPLASTIC"/>
    <property type="match status" value="1"/>
</dbReference>
<dbReference type="Pfam" id="PF01761">
    <property type="entry name" value="DHQ_synthase"/>
    <property type="match status" value="1"/>
</dbReference>
<dbReference type="Pfam" id="PF24621">
    <property type="entry name" value="DHQS_C"/>
    <property type="match status" value="1"/>
</dbReference>
<dbReference type="PIRSF" id="PIRSF001455">
    <property type="entry name" value="DHQ_synth"/>
    <property type="match status" value="1"/>
</dbReference>
<dbReference type="SUPFAM" id="SSF56796">
    <property type="entry name" value="Dehydroquinate synthase-like"/>
    <property type="match status" value="1"/>
</dbReference>
<name>AROB_ACIBY</name>